<proteinExistence type="inferred from homology"/>
<comment type="function">
    <text evidence="1">Key enzyme in the regulation of glycerol uptake and metabolism. Catalyzes the phosphorylation of glycerol to yield sn-glycerol 3-phosphate.</text>
</comment>
<comment type="catalytic activity">
    <reaction evidence="1">
        <text>glycerol + ATP = sn-glycerol 3-phosphate + ADP + H(+)</text>
        <dbReference type="Rhea" id="RHEA:21644"/>
        <dbReference type="ChEBI" id="CHEBI:15378"/>
        <dbReference type="ChEBI" id="CHEBI:17754"/>
        <dbReference type="ChEBI" id="CHEBI:30616"/>
        <dbReference type="ChEBI" id="CHEBI:57597"/>
        <dbReference type="ChEBI" id="CHEBI:456216"/>
        <dbReference type="EC" id="2.7.1.30"/>
    </reaction>
</comment>
<comment type="activity regulation">
    <text evidence="1">Inhibited by fructose 1,6-bisphosphate (FBP).</text>
</comment>
<comment type="pathway">
    <text evidence="1">Polyol metabolism; glycerol degradation via glycerol kinase pathway; sn-glycerol 3-phosphate from glycerol: step 1/1.</text>
</comment>
<comment type="similarity">
    <text evidence="1">Belongs to the FGGY kinase family.</text>
</comment>
<feature type="chain" id="PRO_0000059438" description="Glycerol kinase">
    <location>
        <begin position="1"/>
        <end position="508"/>
    </location>
</feature>
<feature type="binding site" evidence="1">
    <location>
        <position position="14"/>
    </location>
    <ligand>
        <name>ADP</name>
        <dbReference type="ChEBI" id="CHEBI:456216"/>
    </ligand>
</feature>
<feature type="binding site" evidence="1">
    <location>
        <position position="14"/>
    </location>
    <ligand>
        <name>ATP</name>
        <dbReference type="ChEBI" id="CHEBI:30616"/>
    </ligand>
</feature>
<feature type="binding site" evidence="1">
    <location>
        <position position="14"/>
    </location>
    <ligand>
        <name>sn-glycerol 3-phosphate</name>
        <dbReference type="ChEBI" id="CHEBI:57597"/>
    </ligand>
</feature>
<feature type="binding site" evidence="1">
    <location>
        <position position="15"/>
    </location>
    <ligand>
        <name>ATP</name>
        <dbReference type="ChEBI" id="CHEBI:30616"/>
    </ligand>
</feature>
<feature type="binding site" evidence="1">
    <location>
        <position position="16"/>
    </location>
    <ligand>
        <name>ATP</name>
        <dbReference type="ChEBI" id="CHEBI:30616"/>
    </ligand>
</feature>
<feature type="binding site" evidence="1">
    <location>
        <position position="18"/>
    </location>
    <ligand>
        <name>ADP</name>
        <dbReference type="ChEBI" id="CHEBI:456216"/>
    </ligand>
</feature>
<feature type="binding site" evidence="1">
    <location>
        <position position="84"/>
    </location>
    <ligand>
        <name>glycerol</name>
        <dbReference type="ChEBI" id="CHEBI:17754"/>
    </ligand>
</feature>
<feature type="binding site" evidence="1">
    <location>
        <position position="84"/>
    </location>
    <ligand>
        <name>sn-glycerol 3-phosphate</name>
        <dbReference type="ChEBI" id="CHEBI:57597"/>
    </ligand>
</feature>
<feature type="binding site" evidence="1">
    <location>
        <position position="85"/>
    </location>
    <ligand>
        <name>glycerol</name>
        <dbReference type="ChEBI" id="CHEBI:17754"/>
    </ligand>
</feature>
<feature type="binding site" evidence="1">
    <location>
        <position position="85"/>
    </location>
    <ligand>
        <name>sn-glycerol 3-phosphate</name>
        <dbReference type="ChEBI" id="CHEBI:57597"/>
    </ligand>
</feature>
<feature type="binding site" evidence="1">
    <location>
        <position position="136"/>
    </location>
    <ligand>
        <name>glycerol</name>
        <dbReference type="ChEBI" id="CHEBI:17754"/>
    </ligand>
</feature>
<feature type="binding site" evidence="1">
    <location>
        <position position="136"/>
    </location>
    <ligand>
        <name>sn-glycerol 3-phosphate</name>
        <dbReference type="ChEBI" id="CHEBI:57597"/>
    </ligand>
</feature>
<feature type="binding site" evidence="1">
    <location>
        <position position="245"/>
    </location>
    <ligand>
        <name>glycerol</name>
        <dbReference type="ChEBI" id="CHEBI:17754"/>
    </ligand>
</feature>
<feature type="binding site" evidence="1">
    <location>
        <position position="245"/>
    </location>
    <ligand>
        <name>sn-glycerol 3-phosphate</name>
        <dbReference type="ChEBI" id="CHEBI:57597"/>
    </ligand>
</feature>
<feature type="binding site" evidence="1">
    <location>
        <position position="246"/>
    </location>
    <ligand>
        <name>glycerol</name>
        <dbReference type="ChEBI" id="CHEBI:17754"/>
    </ligand>
</feature>
<feature type="binding site" evidence="1">
    <location>
        <position position="267"/>
    </location>
    <ligand>
        <name>ADP</name>
        <dbReference type="ChEBI" id="CHEBI:456216"/>
    </ligand>
</feature>
<feature type="binding site" evidence="1">
    <location>
        <position position="267"/>
    </location>
    <ligand>
        <name>ATP</name>
        <dbReference type="ChEBI" id="CHEBI:30616"/>
    </ligand>
</feature>
<feature type="binding site" evidence="1">
    <location>
        <position position="314"/>
    </location>
    <ligand>
        <name>ADP</name>
        <dbReference type="ChEBI" id="CHEBI:456216"/>
    </ligand>
</feature>
<feature type="binding site" evidence="1">
    <location>
        <position position="314"/>
    </location>
    <ligand>
        <name>ATP</name>
        <dbReference type="ChEBI" id="CHEBI:30616"/>
    </ligand>
</feature>
<feature type="binding site" evidence="1">
    <location>
        <position position="318"/>
    </location>
    <ligand>
        <name>ATP</name>
        <dbReference type="ChEBI" id="CHEBI:30616"/>
    </ligand>
</feature>
<feature type="binding site" evidence="1">
    <location>
        <position position="419"/>
    </location>
    <ligand>
        <name>ADP</name>
        <dbReference type="ChEBI" id="CHEBI:456216"/>
    </ligand>
</feature>
<reference key="1">
    <citation type="journal article" date="2003" name="Nat. Genet.">
        <title>Comparative analysis of the genome sequences of Bordetella pertussis, Bordetella parapertussis and Bordetella bronchiseptica.</title>
        <authorList>
            <person name="Parkhill J."/>
            <person name="Sebaihia M."/>
            <person name="Preston A."/>
            <person name="Murphy L.D."/>
            <person name="Thomson N.R."/>
            <person name="Harris D.E."/>
            <person name="Holden M.T.G."/>
            <person name="Churcher C.M."/>
            <person name="Bentley S.D."/>
            <person name="Mungall K.L."/>
            <person name="Cerdeno-Tarraga A.-M."/>
            <person name="Temple L."/>
            <person name="James K.D."/>
            <person name="Harris B."/>
            <person name="Quail M.A."/>
            <person name="Achtman M."/>
            <person name="Atkin R."/>
            <person name="Baker S."/>
            <person name="Basham D."/>
            <person name="Bason N."/>
            <person name="Cherevach I."/>
            <person name="Chillingworth T."/>
            <person name="Collins M."/>
            <person name="Cronin A."/>
            <person name="Davis P."/>
            <person name="Doggett J."/>
            <person name="Feltwell T."/>
            <person name="Goble A."/>
            <person name="Hamlin N."/>
            <person name="Hauser H."/>
            <person name="Holroyd S."/>
            <person name="Jagels K."/>
            <person name="Leather S."/>
            <person name="Moule S."/>
            <person name="Norberczak H."/>
            <person name="O'Neil S."/>
            <person name="Ormond D."/>
            <person name="Price C."/>
            <person name="Rabbinowitsch E."/>
            <person name="Rutter S."/>
            <person name="Sanders M."/>
            <person name="Saunders D."/>
            <person name="Seeger K."/>
            <person name="Sharp S."/>
            <person name="Simmonds M."/>
            <person name="Skelton J."/>
            <person name="Squares R."/>
            <person name="Squares S."/>
            <person name="Stevens K."/>
            <person name="Unwin L."/>
            <person name="Whitehead S."/>
            <person name="Barrell B.G."/>
            <person name="Maskell D.J."/>
        </authorList>
    </citation>
    <scope>NUCLEOTIDE SEQUENCE [LARGE SCALE GENOMIC DNA]</scope>
    <source>
        <strain>Tohama I / ATCC BAA-589 / NCTC 13251</strain>
    </source>
</reference>
<organism>
    <name type="scientific">Bordetella pertussis (strain Tohama I / ATCC BAA-589 / NCTC 13251)</name>
    <dbReference type="NCBI Taxonomy" id="257313"/>
    <lineage>
        <taxon>Bacteria</taxon>
        <taxon>Pseudomonadati</taxon>
        <taxon>Pseudomonadota</taxon>
        <taxon>Betaproteobacteria</taxon>
        <taxon>Burkholderiales</taxon>
        <taxon>Alcaligenaceae</taxon>
        <taxon>Bordetella</taxon>
    </lineage>
</organism>
<evidence type="ECO:0000255" key="1">
    <source>
        <dbReference type="HAMAP-Rule" id="MF_00186"/>
    </source>
</evidence>
<name>GLPK_BORPE</name>
<accession>Q7VSU7</accession>
<protein>
    <recommendedName>
        <fullName evidence="1">Glycerol kinase</fullName>
        <ecNumber evidence="1">2.7.1.30</ecNumber>
    </recommendedName>
    <alternativeName>
        <fullName evidence="1">ATP:glycerol 3-phosphotransferase</fullName>
    </alternativeName>
    <alternativeName>
        <fullName evidence="1">Glycerokinase</fullName>
        <shortName evidence="1">GK</shortName>
    </alternativeName>
</protein>
<dbReference type="EC" id="2.7.1.30" evidence="1"/>
<dbReference type="EMBL" id="BX640422">
    <property type="protein sequence ID" value="CAE44080.1"/>
    <property type="molecule type" value="Genomic_DNA"/>
</dbReference>
<dbReference type="RefSeq" id="NP_882323.1">
    <property type="nucleotide sequence ID" value="NC_002929.2"/>
</dbReference>
<dbReference type="RefSeq" id="WP_010931670.1">
    <property type="nucleotide sequence ID" value="NZ_CP039022.1"/>
</dbReference>
<dbReference type="SMR" id="Q7VSU7"/>
<dbReference type="STRING" id="257313.BP3825"/>
<dbReference type="PaxDb" id="257313-BP3825"/>
<dbReference type="GeneID" id="69603699"/>
<dbReference type="KEGG" id="bpe:BP3825"/>
<dbReference type="PATRIC" id="fig|257313.5.peg.4133"/>
<dbReference type="eggNOG" id="COG0554">
    <property type="taxonomic scope" value="Bacteria"/>
</dbReference>
<dbReference type="HOGENOM" id="CLU_009281_2_3_4"/>
<dbReference type="UniPathway" id="UPA00618">
    <property type="reaction ID" value="UER00672"/>
</dbReference>
<dbReference type="Proteomes" id="UP000002676">
    <property type="component" value="Chromosome"/>
</dbReference>
<dbReference type="GO" id="GO:0005829">
    <property type="term" value="C:cytosol"/>
    <property type="evidence" value="ECO:0007669"/>
    <property type="project" value="TreeGrafter"/>
</dbReference>
<dbReference type="GO" id="GO:0005524">
    <property type="term" value="F:ATP binding"/>
    <property type="evidence" value="ECO:0007669"/>
    <property type="project" value="UniProtKB-UniRule"/>
</dbReference>
<dbReference type="GO" id="GO:0004370">
    <property type="term" value="F:glycerol kinase activity"/>
    <property type="evidence" value="ECO:0000250"/>
    <property type="project" value="UniProtKB"/>
</dbReference>
<dbReference type="GO" id="GO:0019563">
    <property type="term" value="P:glycerol catabolic process"/>
    <property type="evidence" value="ECO:0007669"/>
    <property type="project" value="UniProtKB-UniRule"/>
</dbReference>
<dbReference type="GO" id="GO:0006071">
    <property type="term" value="P:glycerol metabolic process"/>
    <property type="evidence" value="ECO:0000250"/>
    <property type="project" value="UniProtKB"/>
</dbReference>
<dbReference type="GO" id="GO:0006072">
    <property type="term" value="P:glycerol-3-phosphate metabolic process"/>
    <property type="evidence" value="ECO:0007669"/>
    <property type="project" value="InterPro"/>
</dbReference>
<dbReference type="CDD" id="cd07786">
    <property type="entry name" value="FGGY_EcGK_like"/>
    <property type="match status" value="1"/>
</dbReference>
<dbReference type="FunFam" id="3.30.420.40:FF:000007">
    <property type="entry name" value="Glycerol kinase"/>
    <property type="match status" value="1"/>
</dbReference>
<dbReference type="FunFam" id="3.30.420.40:FF:000008">
    <property type="entry name" value="Glycerol kinase"/>
    <property type="match status" value="1"/>
</dbReference>
<dbReference type="Gene3D" id="3.30.420.40">
    <property type="match status" value="2"/>
</dbReference>
<dbReference type="HAMAP" id="MF_00186">
    <property type="entry name" value="Glycerol_kin"/>
    <property type="match status" value="1"/>
</dbReference>
<dbReference type="InterPro" id="IPR043129">
    <property type="entry name" value="ATPase_NBD"/>
</dbReference>
<dbReference type="InterPro" id="IPR000577">
    <property type="entry name" value="Carb_kinase_FGGY"/>
</dbReference>
<dbReference type="InterPro" id="IPR018483">
    <property type="entry name" value="Carb_kinase_FGGY_CS"/>
</dbReference>
<dbReference type="InterPro" id="IPR018485">
    <property type="entry name" value="FGGY_C"/>
</dbReference>
<dbReference type="InterPro" id="IPR018484">
    <property type="entry name" value="FGGY_N"/>
</dbReference>
<dbReference type="InterPro" id="IPR005999">
    <property type="entry name" value="Glycerol_kin"/>
</dbReference>
<dbReference type="NCBIfam" id="TIGR01311">
    <property type="entry name" value="glycerol_kin"/>
    <property type="match status" value="1"/>
</dbReference>
<dbReference type="NCBIfam" id="NF000756">
    <property type="entry name" value="PRK00047.1"/>
    <property type="match status" value="1"/>
</dbReference>
<dbReference type="PANTHER" id="PTHR10196:SF69">
    <property type="entry name" value="GLYCEROL KINASE"/>
    <property type="match status" value="1"/>
</dbReference>
<dbReference type="PANTHER" id="PTHR10196">
    <property type="entry name" value="SUGAR KINASE"/>
    <property type="match status" value="1"/>
</dbReference>
<dbReference type="Pfam" id="PF02782">
    <property type="entry name" value="FGGY_C"/>
    <property type="match status" value="1"/>
</dbReference>
<dbReference type="Pfam" id="PF00370">
    <property type="entry name" value="FGGY_N"/>
    <property type="match status" value="1"/>
</dbReference>
<dbReference type="PIRSF" id="PIRSF000538">
    <property type="entry name" value="GlpK"/>
    <property type="match status" value="1"/>
</dbReference>
<dbReference type="SUPFAM" id="SSF53067">
    <property type="entry name" value="Actin-like ATPase domain"/>
    <property type="match status" value="2"/>
</dbReference>
<dbReference type="PROSITE" id="PS00933">
    <property type="entry name" value="FGGY_KINASES_1"/>
    <property type="match status" value="1"/>
</dbReference>
<dbReference type="PROSITE" id="PS00445">
    <property type="entry name" value="FGGY_KINASES_2"/>
    <property type="match status" value="1"/>
</dbReference>
<gene>
    <name evidence="1" type="primary">glpK</name>
    <name type="ordered locus">BP3825</name>
</gene>
<sequence length="508" mass="54714">MTANEFILALDQGTTSSRAIVFDRAGTVRGMGQREFRQHYPRPGWVEHDAGEIWQSQLEVAREALRNAGASAADLAALGITNQRETTLIWERATGRPLARAIVWQDRRTAAMCEKLLHDGHGRMLQERTGLVVDAYFSGTKLAWLLDHVPGARKMAERGELAFGTMDTWLVWQLTGGAVHSTDPSNASRTMLFDLHAQDWSDDILALLNIPRGILPRIAPSSARIGETLPEWLGGSIPIAGVAGDQQAATFGQACFTPGMAKNTYGTGCFMLMNVGDAPVASRHNLLSTVGWSLPAGNATHATYMVEGGVFMAGAAVQWLRDGLGIIQRSADIEALAASVADTDDVFMVPAFAGLGAPHWDPYARGTLVGMTRGTTRAHIARATLESIALQSAELLSCMNADSGIPLSELRVDGSAARNDLLMQMQADLLGVPVVRPRVPESTALGAAGLAGLAVGFWSSLDEFGAQWQAERTFEPAWPADVREARMQRWRQAVELSKGWSRPAAGHA</sequence>
<keyword id="KW-0067">ATP-binding</keyword>
<keyword id="KW-0319">Glycerol metabolism</keyword>
<keyword id="KW-0418">Kinase</keyword>
<keyword id="KW-0547">Nucleotide-binding</keyword>
<keyword id="KW-1185">Reference proteome</keyword>
<keyword id="KW-0808">Transferase</keyword>